<accession>P9WI20</accession>
<accession>L0T761</accession>
<accession>Q10778</accession>
<sequence length="678" mass="66679">MNFSVLPPEINSALMFAGAGPGPMLAAASAWTGLAGDLGSAAASFSAVTSQLATGSWQGPASAAMTGVAASYARWLTTAAAQAEQAAGQAQAAVSAFEAALAATVHPGAVSANRGRLRSLVASNLLGQNAPAIAAVEAVYEQMWAADVAAMLGYHGEASAVALSLTPFTPSPSAAATPGGAVIIAGFPFLDLGNVTIGGFNLASGNLGLGNLGSFNPGSANTGSVNLGNANIGDLNLGSGNIGSYNLGGGNTGDLNPGSGNTGTLNWGSGNIGSYNLGGGNLGSYNLGSGNTGDTNFGGGNTGNLNVGGGNTGNSNFGFGNTGNVNFGNGNTGDTNFGSGNLGSGNIGFGNKGSHNIGFGNSGNNNIGFGLTGDNQIGFGALNSGSGNLGFGNSGNGNIGFFNSGNNNIGMGNSGNGVGALSVEFGSSAERSSGFGNSGELSTGIGNSGQLSTGWFNSATTSTGWFNSGTTNTGWFNSGTTNTGIGNSGGNLVTGSMGLFNSGHTNTGSFNAGSMNTGDFNSGNVNTGYFNSGNINTGFFNSGDLNTGLFNSVNQPVQNSGWLHTGTNNSGYANAGTFNSGFDNNARDEHAEFVTGNSGLANVGNYNAGIINVGDHLSGFRNSVPTITGTANISGFVNAGTSISGFFNFGSLMSGFANFDDEVSGYLNGDSRASGWIH</sequence>
<name>PPE21_MYCTO</name>
<gene>
    <name type="primary">PPE21</name>
    <name type="ordered locus">MT1599</name>
</gene>
<feature type="chain" id="PRO_0000428083" description="Uncharacterized PPE family protein PPE21">
    <location>
        <begin position="1"/>
        <end position="678"/>
    </location>
</feature>
<feature type="transmembrane region" description="Helical" evidence="1">
    <location>
        <begin position="14"/>
        <end position="34"/>
    </location>
</feature>
<feature type="transmembrane region" description="Helical" evidence="1">
    <location>
        <begin position="180"/>
        <end position="200"/>
    </location>
</feature>
<proteinExistence type="inferred from homology"/>
<comment type="subcellular location">
    <subcellularLocation>
        <location evidence="2">Cell membrane</location>
        <topology evidence="2">Multi-pass membrane protein</topology>
    </subcellularLocation>
</comment>
<comment type="similarity">
    <text evidence="2">Belongs to the mycobacterial PPE family.</text>
</comment>
<comment type="sequence caution" evidence="2">
    <conflict type="erroneous initiation">
        <sequence resource="EMBL-CDS" id="AAK45866"/>
    </conflict>
</comment>
<organism>
    <name type="scientific">Mycobacterium tuberculosis (strain CDC 1551 / Oshkosh)</name>
    <dbReference type="NCBI Taxonomy" id="83331"/>
    <lineage>
        <taxon>Bacteria</taxon>
        <taxon>Bacillati</taxon>
        <taxon>Actinomycetota</taxon>
        <taxon>Actinomycetes</taxon>
        <taxon>Mycobacteriales</taxon>
        <taxon>Mycobacteriaceae</taxon>
        <taxon>Mycobacterium</taxon>
        <taxon>Mycobacterium tuberculosis complex</taxon>
    </lineage>
</organism>
<dbReference type="EMBL" id="AE000516">
    <property type="protein sequence ID" value="AAK45866.1"/>
    <property type="status" value="ALT_INIT"/>
    <property type="molecule type" value="Genomic_DNA"/>
</dbReference>
<dbReference type="PIR" id="A70762">
    <property type="entry name" value="A70762"/>
</dbReference>
<dbReference type="RefSeq" id="WP_003903497.1">
    <property type="nucleotide sequence ID" value="NZ_KK341227.1"/>
</dbReference>
<dbReference type="KEGG" id="mtc:MT1599"/>
<dbReference type="PATRIC" id="fig|83331.31.peg.1720"/>
<dbReference type="HOGENOM" id="CLU_000243_4_3_11"/>
<dbReference type="Proteomes" id="UP000001020">
    <property type="component" value="Chromosome"/>
</dbReference>
<dbReference type="GO" id="GO:0005886">
    <property type="term" value="C:plasma membrane"/>
    <property type="evidence" value="ECO:0007669"/>
    <property type="project" value="UniProtKB-SubCell"/>
</dbReference>
<dbReference type="GO" id="GO:0052572">
    <property type="term" value="P:response to host immune response"/>
    <property type="evidence" value="ECO:0007669"/>
    <property type="project" value="TreeGrafter"/>
</dbReference>
<dbReference type="FunFam" id="1.20.1260.20:FF:000001">
    <property type="entry name" value="PPE family protein PPE41"/>
    <property type="match status" value="1"/>
</dbReference>
<dbReference type="Gene3D" id="1.20.1260.20">
    <property type="entry name" value="PPE superfamily"/>
    <property type="match status" value="1"/>
</dbReference>
<dbReference type="InterPro" id="IPR002989">
    <property type="entry name" value="Mycobac_pentapep"/>
</dbReference>
<dbReference type="InterPro" id="IPR000030">
    <property type="entry name" value="PPE_dom"/>
</dbReference>
<dbReference type="InterPro" id="IPR038332">
    <property type="entry name" value="PPE_sf"/>
</dbReference>
<dbReference type="PANTHER" id="PTHR46766">
    <property type="entry name" value="GLUTAMINE-RICH PROTEIN 2"/>
    <property type="match status" value="1"/>
</dbReference>
<dbReference type="PANTHER" id="PTHR46766:SF1">
    <property type="entry name" value="GLUTAMINE-RICH PROTEIN 2"/>
    <property type="match status" value="1"/>
</dbReference>
<dbReference type="Pfam" id="PF01469">
    <property type="entry name" value="Pentapeptide_2"/>
    <property type="match status" value="6"/>
</dbReference>
<dbReference type="Pfam" id="PF00823">
    <property type="entry name" value="PPE"/>
    <property type="match status" value="1"/>
</dbReference>
<dbReference type="SUPFAM" id="SSF140459">
    <property type="entry name" value="PE/PPE dimer-like"/>
    <property type="match status" value="1"/>
</dbReference>
<keyword id="KW-1003">Cell membrane</keyword>
<keyword id="KW-0472">Membrane</keyword>
<keyword id="KW-1185">Reference proteome</keyword>
<keyword id="KW-0812">Transmembrane</keyword>
<keyword id="KW-1133">Transmembrane helix</keyword>
<protein>
    <recommendedName>
        <fullName>Uncharacterized PPE family protein PPE21</fullName>
    </recommendedName>
</protein>
<evidence type="ECO:0000255" key="1"/>
<evidence type="ECO:0000305" key="2"/>
<reference key="1">
    <citation type="journal article" date="2002" name="J. Bacteriol.">
        <title>Whole-genome comparison of Mycobacterium tuberculosis clinical and laboratory strains.</title>
        <authorList>
            <person name="Fleischmann R.D."/>
            <person name="Alland D."/>
            <person name="Eisen J.A."/>
            <person name="Carpenter L."/>
            <person name="White O."/>
            <person name="Peterson J.D."/>
            <person name="DeBoy R.T."/>
            <person name="Dodson R.J."/>
            <person name="Gwinn M.L."/>
            <person name="Haft D.H."/>
            <person name="Hickey E.K."/>
            <person name="Kolonay J.F."/>
            <person name="Nelson W.C."/>
            <person name="Umayam L.A."/>
            <person name="Ermolaeva M.D."/>
            <person name="Salzberg S.L."/>
            <person name="Delcher A."/>
            <person name="Utterback T.R."/>
            <person name="Weidman J.F."/>
            <person name="Khouri H.M."/>
            <person name="Gill J."/>
            <person name="Mikula A."/>
            <person name="Bishai W."/>
            <person name="Jacobs W.R. Jr."/>
            <person name="Venter J.C."/>
            <person name="Fraser C.M."/>
        </authorList>
    </citation>
    <scope>NUCLEOTIDE SEQUENCE [LARGE SCALE GENOMIC DNA]</scope>
    <source>
        <strain>CDC 1551 / Oshkosh</strain>
    </source>
</reference>